<reference key="1">
    <citation type="journal article" date="2009" name="PLoS ONE">
        <title>Non mycobacterial virulence genes in the genome of the emerging pathogen Mycobacterium abscessus.</title>
        <authorList>
            <person name="Ripoll F."/>
            <person name="Pasek S."/>
            <person name="Schenowitz C."/>
            <person name="Dossat C."/>
            <person name="Barbe V."/>
            <person name="Rottman M."/>
            <person name="Macheras E."/>
            <person name="Heym B."/>
            <person name="Herrmann J.L."/>
            <person name="Daffe M."/>
            <person name="Brosch R."/>
            <person name="Risler J.L."/>
            <person name="Gaillard J.L."/>
        </authorList>
    </citation>
    <scope>NUCLEOTIDE SEQUENCE [LARGE SCALE GENOMIC DNA]</scope>
    <source>
        <strain>ATCC 19977 / DSM 44196 / CCUG 20993 / CIP 104536 / JCM 13569 / NCTC 13031 / TMC 1543 / L948</strain>
    </source>
</reference>
<organism>
    <name type="scientific">Mycobacteroides abscessus (strain ATCC 19977 / DSM 44196 / CCUG 20993 / CIP 104536 / JCM 13569 / NCTC 13031 / TMC 1543 / L948)</name>
    <name type="common">Mycobacterium abscessus</name>
    <dbReference type="NCBI Taxonomy" id="561007"/>
    <lineage>
        <taxon>Bacteria</taxon>
        <taxon>Bacillati</taxon>
        <taxon>Actinomycetota</taxon>
        <taxon>Actinomycetes</taxon>
        <taxon>Mycobacteriales</taxon>
        <taxon>Mycobacteriaceae</taxon>
        <taxon>Mycobacteroides</taxon>
        <taxon>Mycobacteroides abscessus</taxon>
    </lineage>
</organism>
<proteinExistence type="inferred from homology"/>
<gene>
    <name evidence="1" type="primary">leuC</name>
    <name type="ordered locus">MAB_3294c</name>
</gene>
<dbReference type="EC" id="4.2.1.33" evidence="1"/>
<dbReference type="EMBL" id="CU458896">
    <property type="protein sequence ID" value="CAM63370.1"/>
    <property type="molecule type" value="Genomic_DNA"/>
</dbReference>
<dbReference type="SMR" id="B1MDQ1"/>
<dbReference type="KEGG" id="mab:MAB_3294c"/>
<dbReference type="UniPathway" id="UPA00048">
    <property type="reaction ID" value="UER00071"/>
</dbReference>
<dbReference type="Proteomes" id="UP000007137">
    <property type="component" value="Chromosome"/>
</dbReference>
<dbReference type="GO" id="GO:0003861">
    <property type="term" value="F:3-isopropylmalate dehydratase activity"/>
    <property type="evidence" value="ECO:0007669"/>
    <property type="project" value="UniProtKB-UniRule"/>
</dbReference>
<dbReference type="GO" id="GO:0051539">
    <property type="term" value="F:4 iron, 4 sulfur cluster binding"/>
    <property type="evidence" value="ECO:0007669"/>
    <property type="project" value="UniProtKB-KW"/>
</dbReference>
<dbReference type="GO" id="GO:0046872">
    <property type="term" value="F:metal ion binding"/>
    <property type="evidence" value="ECO:0007669"/>
    <property type="project" value="UniProtKB-KW"/>
</dbReference>
<dbReference type="GO" id="GO:0009098">
    <property type="term" value="P:L-leucine biosynthetic process"/>
    <property type="evidence" value="ECO:0007669"/>
    <property type="project" value="UniProtKB-UniRule"/>
</dbReference>
<dbReference type="CDD" id="cd01583">
    <property type="entry name" value="IPMI"/>
    <property type="match status" value="1"/>
</dbReference>
<dbReference type="FunFam" id="3.30.499.10:FF:000007">
    <property type="entry name" value="3-isopropylmalate dehydratase large subunit"/>
    <property type="match status" value="1"/>
</dbReference>
<dbReference type="Gene3D" id="3.30.499.10">
    <property type="entry name" value="Aconitase, domain 3"/>
    <property type="match status" value="2"/>
</dbReference>
<dbReference type="HAMAP" id="MF_01026">
    <property type="entry name" value="LeuC_type1"/>
    <property type="match status" value="1"/>
</dbReference>
<dbReference type="InterPro" id="IPR004430">
    <property type="entry name" value="3-IsopropMal_deHydase_lsu"/>
</dbReference>
<dbReference type="InterPro" id="IPR015931">
    <property type="entry name" value="Acnase/IPM_dHydase_lsu_aba_1/3"/>
</dbReference>
<dbReference type="InterPro" id="IPR001030">
    <property type="entry name" value="Acoase/IPM_deHydtase_lsu_aba"/>
</dbReference>
<dbReference type="InterPro" id="IPR018136">
    <property type="entry name" value="Aconitase_4Fe-4S_BS"/>
</dbReference>
<dbReference type="InterPro" id="IPR036008">
    <property type="entry name" value="Aconitase_4Fe-4S_dom"/>
</dbReference>
<dbReference type="InterPro" id="IPR050067">
    <property type="entry name" value="IPM_dehydratase_rel_enz"/>
</dbReference>
<dbReference type="InterPro" id="IPR033941">
    <property type="entry name" value="IPMI_cat"/>
</dbReference>
<dbReference type="NCBIfam" id="TIGR00170">
    <property type="entry name" value="leuC"/>
    <property type="match status" value="1"/>
</dbReference>
<dbReference type="NCBIfam" id="NF004016">
    <property type="entry name" value="PRK05478.1"/>
    <property type="match status" value="1"/>
</dbReference>
<dbReference type="NCBIfam" id="NF009116">
    <property type="entry name" value="PRK12466.1"/>
    <property type="match status" value="1"/>
</dbReference>
<dbReference type="PANTHER" id="PTHR43822:SF9">
    <property type="entry name" value="3-ISOPROPYLMALATE DEHYDRATASE"/>
    <property type="match status" value="1"/>
</dbReference>
<dbReference type="PANTHER" id="PTHR43822">
    <property type="entry name" value="HOMOACONITASE, MITOCHONDRIAL-RELATED"/>
    <property type="match status" value="1"/>
</dbReference>
<dbReference type="Pfam" id="PF00330">
    <property type="entry name" value="Aconitase"/>
    <property type="match status" value="1"/>
</dbReference>
<dbReference type="PRINTS" id="PR00415">
    <property type="entry name" value="ACONITASE"/>
</dbReference>
<dbReference type="SUPFAM" id="SSF53732">
    <property type="entry name" value="Aconitase iron-sulfur domain"/>
    <property type="match status" value="1"/>
</dbReference>
<dbReference type="PROSITE" id="PS00450">
    <property type="entry name" value="ACONITASE_1"/>
    <property type="match status" value="1"/>
</dbReference>
<dbReference type="PROSITE" id="PS01244">
    <property type="entry name" value="ACONITASE_2"/>
    <property type="match status" value="1"/>
</dbReference>
<accession>B1MDQ1</accession>
<feature type="chain" id="PRO_1000135695" description="3-isopropylmalate dehydratase large subunit">
    <location>
        <begin position="1"/>
        <end position="480"/>
    </location>
</feature>
<feature type="region of interest" description="Disordered" evidence="2">
    <location>
        <begin position="431"/>
        <end position="454"/>
    </location>
</feature>
<feature type="compositionally biased region" description="Polar residues" evidence="2">
    <location>
        <begin position="431"/>
        <end position="441"/>
    </location>
</feature>
<feature type="binding site" evidence="1">
    <location>
        <position position="357"/>
    </location>
    <ligand>
        <name>[4Fe-4S] cluster</name>
        <dbReference type="ChEBI" id="CHEBI:49883"/>
    </ligand>
</feature>
<feature type="binding site" evidence="1">
    <location>
        <position position="417"/>
    </location>
    <ligand>
        <name>[4Fe-4S] cluster</name>
        <dbReference type="ChEBI" id="CHEBI:49883"/>
    </ligand>
</feature>
<feature type="binding site" evidence="1">
    <location>
        <position position="420"/>
    </location>
    <ligand>
        <name>[4Fe-4S] cluster</name>
        <dbReference type="ChEBI" id="CHEBI:49883"/>
    </ligand>
</feature>
<comment type="function">
    <text evidence="1">Catalyzes the isomerization between 2-isopropylmalate and 3-isopropylmalate, via the formation of 2-isopropylmaleate.</text>
</comment>
<comment type="catalytic activity">
    <reaction evidence="1">
        <text>(2R,3S)-3-isopropylmalate = (2S)-2-isopropylmalate</text>
        <dbReference type="Rhea" id="RHEA:32287"/>
        <dbReference type="ChEBI" id="CHEBI:1178"/>
        <dbReference type="ChEBI" id="CHEBI:35121"/>
        <dbReference type="EC" id="4.2.1.33"/>
    </reaction>
</comment>
<comment type="cofactor">
    <cofactor evidence="1">
        <name>[4Fe-4S] cluster</name>
        <dbReference type="ChEBI" id="CHEBI:49883"/>
    </cofactor>
    <text evidence="1">Binds 1 [4Fe-4S] cluster per subunit.</text>
</comment>
<comment type="pathway">
    <text evidence="1">Amino-acid biosynthesis; L-leucine biosynthesis; L-leucine from 3-methyl-2-oxobutanoate: step 2/4.</text>
</comment>
<comment type="subunit">
    <text evidence="1">Heterodimer of LeuC and LeuD.</text>
</comment>
<comment type="similarity">
    <text evidence="1">Belongs to the aconitase/IPM isomerase family. LeuC type 1 subfamily.</text>
</comment>
<keyword id="KW-0004">4Fe-4S</keyword>
<keyword id="KW-0028">Amino-acid biosynthesis</keyword>
<keyword id="KW-0100">Branched-chain amino acid biosynthesis</keyword>
<keyword id="KW-0408">Iron</keyword>
<keyword id="KW-0411">Iron-sulfur</keyword>
<keyword id="KW-0432">Leucine biosynthesis</keyword>
<keyword id="KW-0456">Lyase</keyword>
<keyword id="KW-0479">Metal-binding</keyword>
<keyword id="KW-1185">Reference proteome</keyword>
<protein>
    <recommendedName>
        <fullName evidence="1">3-isopropylmalate dehydratase large subunit</fullName>
        <ecNumber evidence="1">4.2.1.33</ecNumber>
    </recommendedName>
    <alternativeName>
        <fullName evidence="1">Alpha-IPM isomerase</fullName>
        <shortName evidence="1">IPMI</shortName>
    </alternativeName>
    <alternativeName>
        <fullName evidence="1">Isopropylmalate isomerase</fullName>
    </alternativeName>
</protein>
<evidence type="ECO:0000255" key="1">
    <source>
        <dbReference type="HAMAP-Rule" id="MF_01026"/>
    </source>
</evidence>
<evidence type="ECO:0000256" key="2">
    <source>
        <dbReference type="SAM" id="MobiDB-lite"/>
    </source>
</evidence>
<sequence length="480" mass="51216">MTSVQQPRTLAEKVWDSHVVVRGTGEGEAREPDLIYIDLHLVHEVTSPQAFDGLRLAGRQVRRPDLTIATEDHNVPTIDIDKPIADPVSRTQVETLRKNCEEFGIRLHPMGDAEQGIVHVVGPQLGLTQPGTTVVCGDSHTSTHGAFGALAMGIGTSEVEHVLATQTLPLRPFRTMAINIDGSLPTGVTSKDVILAVIAKIGTGGGQGYVLEYRGQAVEEMSMEARMTMCNMSIEAGARAGMVAPDETTYAYLKDRPHAPKGQLWDAAVAEWDSLRTDEGAQFDAEVHIDASTLTPFVTWGTNPGQGVPLGADVPDPELMADEEERLAAEKALTYMDLTPGTPMREIPVDTVFVGSCTNGRIEDLRAVADVLRDRKVAAGVTMLIVPGSMRVRAQAESEGLGEIFAAAGAQWRQAGCSMCLGMNPDQLSPGQRCASTSNRNFEGRQGKGGRTHLVSPAVAAATAVRGKLSSPADLAKSVK</sequence>
<name>LEUC_MYCA9</name>